<feature type="chain" id="PRO_0000128299" description="Pantoate--beta-alanine ligase">
    <location>
        <begin position="1"/>
        <end position="310"/>
    </location>
</feature>
<feature type="active site" description="Proton donor" evidence="1">
    <location>
        <position position="39"/>
    </location>
</feature>
<feature type="binding site" evidence="1">
    <location>
        <begin position="32"/>
        <end position="39"/>
    </location>
    <ligand>
        <name>ATP</name>
        <dbReference type="ChEBI" id="CHEBI:30616"/>
    </ligand>
</feature>
<feature type="binding site" evidence="1">
    <location>
        <position position="63"/>
    </location>
    <ligand>
        <name>(R)-pantoate</name>
        <dbReference type="ChEBI" id="CHEBI:15980"/>
    </ligand>
</feature>
<feature type="binding site" evidence="1">
    <location>
        <position position="63"/>
    </location>
    <ligand>
        <name>beta-alanine</name>
        <dbReference type="ChEBI" id="CHEBI:57966"/>
    </ligand>
</feature>
<feature type="binding site" evidence="1">
    <location>
        <begin position="175"/>
        <end position="178"/>
    </location>
    <ligand>
        <name>ATP</name>
        <dbReference type="ChEBI" id="CHEBI:30616"/>
    </ligand>
</feature>
<feature type="binding site" evidence="1">
    <location>
        <position position="181"/>
    </location>
    <ligand>
        <name>(R)-pantoate</name>
        <dbReference type="ChEBI" id="CHEBI:15980"/>
    </ligand>
</feature>
<feature type="binding site" evidence="1">
    <location>
        <begin position="212"/>
        <end position="215"/>
    </location>
    <ligand>
        <name>ATP</name>
        <dbReference type="ChEBI" id="CHEBI:30616"/>
    </ligand>
</feature>
<feature type="mutagenesis site" description="Reduces allosteric properties." evidence="3">
    <original>E</original>
    <variation>A</variation>
    <location>
        <position position="132"/>
    </location>
</feature>
<reference key="1">
    <citation type="journal article" date="1998" name="DNA Res.">
        <title>Structural analysis of Arabidopsis thaliana chromosome 5. VI. Sequence features of the regions of 1,367,185 bp covered by 19 physically assigned P1 and TAC clones.</title>
        <authorList>
            <person name="Kotani H."/>
            <person name="Nakamura Y."/>
            <person name="Sato S."/>
            <person name="Asamizu E."/>
            <person name="Kaneko T."/>
            <person name="Miyajima N."/>
            <person name="Tabata S."/>
        </authorList>
    </citation>
    <scope>NUCLEOTIDE SEQUENCE [LARGE SCALE GENOMIC DNA]</scope>
    <source>
        <strain>cv. Columbia</strain>
    </source>
</reference>
<reference key="2">
    <citation type="journal article" date="2017" name="Plant J.">
        <title>Araport11: a complete reannotation of the Arabidopsis thaliana reference genome.</title>
        <authorList>
            <person name="Cheng C.Y."/>
            <person name="Krishnakumar V."/>
            <person name="Chan A.P."/>
            <person name="Thibaud-Nissen F."/>
            <person name="Schobel S."/>
            <person name="Town C.D."/>
        </authorList>
    </citation>
    <scope>GENOME REANNOTATION</scope>
    <source>
        <strain>cv. Columbia</strain>
    </source>
</reference>
<reference key="3">
    <citation type="submission" date="2004-09" db="EMBL/GenBank/DDBJ databases">
        <title>Large-scale analysis of RIKEN Arabidopsis full-length (RAFL) cDNAs.</title>
        <authorList>
            <person name="Totoki Y."/>
            <person name="Seki M."/>
            <person name="Ishida J."/>
            <person name="Nakajima M."/>
            <person name="Enju A."/>
            <person name="Kamiya A."/>
            <person name="Narusaka M."/>
            <person name="Shin-i T."/>
            <person name="Nakagawa M."/>
            <person name="Sakamoto N."/>
            <person name="Oishi K."/>
            <person name="Kohara Y."/>
            <person name="Kobayashi M."/>
            <person name="Toyoda A."/>
            <person name="Sakaki Y."/>
            <person name="Sakurai T."/>
            <person name="Iida K."/>
            <person name="Akiyama K."/>
            <person name="Satou M."/>
            <person name="Toyoda T."/>
            <person name="Konagaya A."/>
            <person name="Carninci P."/>
            <person name="Kawai J."/>
            <person name="Hayashizaki Y."/>
            <person name="Shinozaki K."/>
        </authorList>
    </citation>
    <scope>NUCLEOTIDE SEQUENCE [LARGE SCALE MRNA]</scope>
    <source>
        <strain>cv. Columbia</strain>
    </source>
</reference>
<reference key="4">
    <citation type="journal article" date="2005" name="Biochem. Soc. Trans.">
        <title>Pantothenate biosynthesis in higher plants.</title>
        <authorList>
            <person name="Coxon K.M."/>
            <person name="Chakauya E."/>
            <person name="Ottenhof H.H."/>
            <person name="Whitney H.M."/>
            <person name="Blundell T.L."/>
            <person name="Abell C."/>
            <person name="Smith A.G."/>
        </authorList>
    </citation>
    <scope>SUBCELLULAR LOCATION</scope>
</reference>
<reference key="5">
    <citation type="journal article" date="2006" name="J. Biol. Chem.">
        <title>Molecular adaptation and allostery in plant pantothenate synthetases.</title>
        <authorList>
            <person name="Jonczyk R."/>
            <person name="Genschel U."/>
        </authorList>
    </citation>
    <scope>FUNCTION</scope>
    <scope>CATALYTIC ACTIVITY</scope>
    <scope>ACTIVITY REGULATION</scope>
    <scope>ALLOSTERIC PROPERTIES</scope>
    <scope>BIOPHYSICOCHEMICAL PROPERTIES</scope>
    <scope>SUBUNIT</scope>
    <scope>MUTAGENESIS OF GLU-132</scope>
</reference>
<reference key="6">
    <citation type="journal article" date="2008" name="Plant Mol. Biol.">
        <title>Pantothenate synthetase is essential but not limiting for pantothenate biosynthesis in Arabidopsis.</title>
        <authorList>
            <person name="Jonczyk R."/>
            <person name="Ronconi S."/>
            <person name="Rychlik M."/>
            <person name="Genschel U."/>
        </authorList>
    </citation>
    <scope>FUNCTION</scope>
    <scope>TISSUE SPECIFICITY</scope>
    <scope>DISRUPTION PHENOTYPE</scope>
</reference>
<dbReference type="EC" id="6.3.2.1"/>
<dbReference type="EMBL" id="AB012242">
    <property type="protein sequence ID" value="BAB09437.1"/>
    <property type="molecule type" value="Genomic_DNA"/>
</dbReference>
<dbReference type="EMBL" id="CP002688">
    <property type="protein sequence ID" value="AED95732.1"/>
    <property type="molecule type" value="Genomic_DNA"/>
</dbReference>
<dbReference type="EMBL" id="AK175238">
    <property type="protein sequence ID" value="BAD43001.1"/>
    <property type="molecule type" value="mRNA"/>
</dbReference>
<dbReference type="SMR" id="Q9FKB3"/>
<dbReference type="FunCoup" id="Q9FKB3">
    <property type="interactions" value="495"/>
</dbReference>
<dbReference type="STRING" id="3702.Q9FKB3"/>
<dbReference type="PaxDb" id="3702-AT5G48840.1"/>
<dbReference type="ProteomicsDB" id="248656"/>
<dbReference type="EnsemblPlants" id="AT5G48840.1">
    <property type="protein sequence ID" value="AT5G48840.1"/>
    <property type="gene ID" value="AT5G48840"/>
</dbReference>
<dbReference type="GeneID" id="834942"/>
<dbReference type="Gramene" id="AT5G48840.1">
    <property type="protein sequence ID" value="AT5G48840.1"/>
    <property type="gene ID" value="AT5G48840"/>
</dbReference>
<dbReference type="KEGG" id="ath:AT5G48840"/>
<dbReference type="Araport" id="AT5G48840"/>
<dbReference type="TAIR" id="AT5G48840">
    <property type="gene designation" value="PANC"/>
</dbReference>
<dbReference type="eggNOG" id="KOG3042">
    <property type="taxonomic scope" value="Eukaryota"/>
</dbReference>
<dbReference type="HOGENOM" id="CLU_047148_2_0_1"/>
<dbReference type="InParanoid" id="Q9FKB3"/>
<dbReference type="OMA" id="CNHKLEP"/>
<dbReference type="PhylomeDB" id="Q9FKB3"/>
<dbReference type="BioCyc" id="ARA:AT5G48840-MONOMER"/>
<dbReference type="BioCyc" id="MetaCyc:AT5G48840-MONOMER"/>
<dbReference type="BRENDA" id="6.3.2.1">
    <property type="organism ID" value="399"/>
</dbReference>
<dbReference type="UniPathway" id="UPA00028">
    <property type="reaction ID" value="UER00005"/>
</dbReference>
<dbReference type="PRO" id="PR:Q9FKB3"/>
<dbReference type="Proteomes" id="UP000006548">
    <property type="component" value="Chromosome 5"/>
</dbReference>
<dbReference type="ExpressionAtlas" id="Q9FKB3">
    <property type="expression patterns" value="baseline and differential"/>
</dbReference>
<dbReference type="GO" id="GO:0005829">
    <property type="term" value="C:cytosol"/>
    <property type="evidence" value="ECO:0000314"/>
    <property type="project" value="TAIR"/>
</dbReference>
<dbReference type="GO" id="GO:0005524">
    <property type="term" value="F:ATP binding"/>
    <property type="evidence" value="ECO:0007669"/>
    <property type="project" value="UniProtKB-KW"/>
</dbReference>
<dbReference type="GO" id="GO:0004592">
    <property type="term" value="F:pantoate-beta-alanine ligase activity"/>
    <property type="evidence" value="ECO:0000314"/>
    <property type="project" value="TAIR"/>
</dbReference>
<dbReference type="GO" id="GO:0042803">
    <property type="term" value="F:protein homodimerization activity"/>
    <property type="evidence" value="ECO:0000314"/>
    <property type="project" value="TAIR"/>
</dbReference>
<dbReference type="GO" id="GO:0009793">
    <property type="term" value="P:embryo development ending in seed dormancy"/>
    <property type="evidence" value="ECO:0000315"/>
    <property type="project" value="TAIR"/>
</dbReference>
<dbReference type="GO" id="GO:0015940">
    <property type="term" value="P:pantothenate biosynthetic process"/>
    <property type="evidence" value="ECO:0000315"/>
    <property type="project" value="TAIR"/>
</dbReference>
<dbReference type="CDD" id="cd00560">
    <property type="entry name" value="PanC"/>
    <property type="match status" value="1"/>
</dbReference>
<dbReference type="FunFam" id="3.40.50.620:FF:000160">
    <property type="entry name" value="Pantoate--beta-alanine ligase"/>
    <property type="match status" value="1"/>
</dbReference>
<dbReference type="FunFam" id="3.30.1300.10:FF:000001">
    <property type="entry name" value="Pantothenate synthetase"/>
    <property type="match status" value="1"/>
</dbReference>
<dbReference type="Gene3D" id="3.40.50.620">
    <property type="entry name" value="HUPs"/>
    <property type="match status" value="1"/>
</dbReference>
<dbReference type="Gene3D" id="3.30.1300.10">
    <property type="entry name" value="Pantoate-beta-alanine ligase, C-terminal domain"/>
    <property type="match status" value="1"/>
</dbReference>
<dbReference type="HAMAP" id="MF_00158">
    <property type="entry name" value="PanC"/>
    <property type="match status" value="1"/>
</dbReference>
<dbReference type="InterPro" id="IPR003721">
    <property type="entry name" value="Pantoate_ligase"/>
</dbReference>
<dbReference type="InterPro" id="IPR042176">
    <property type="entry name" value="Pantoate_ligase_C"/>
</dbReference>
<dbReference type="InterPro" id="IPR014729">
    <property type="entry name" value="Rossmann-like_a/b/a_fold"/>
</dbReference>
<dbReference type="NCBIfam" id="TIGR00018">
    <property type="entry name" value="panC"/>
    <property type="match status" value="1"/>
</dbReference>
<dbReference type="PANTHER" id="PTHR21299">
    <property type="entry name" value="CYTIDYLATE KINASE/PANTOATE-BETA-ALANINE LIGASE"/>
    <property type="match status" value="1"/>
</dbReference>
<dbReference type="PANTHER" id="PTHR21299:SF1">
    <property type="entry name" value="PANTOATE--BETA-ALANINE LIGASE"/>
    <property type="match status" value="1"/>
</dbReference>
<dbReference type="Pfam" id="PF02569">
    <property type="entry name" value="Pantoate_ligase"/>
    <property type="match status" value="1"/>
</dbReference>
<dbReference type="SUPFAM" id="SSF52374">
    <property type="entry name" value="Nucleotidylyl transferase"/>
    <property type="match status" value="1"/>
</dbReference>
<name>PANC_ARATH</name>
<evidence type="ECO:0000250" key="1"/>
<evidence type="ECO:0000269" key="2">
    <source>
    </source>
</evidence>
<evidence type="ECO:0000269" key="3">
    <source>
    </source>
</evidence>
<evidence type="ECO:0000269" key="4">
    <source>
    </source>
</evidence>
<evidence type="ECO:0000305" key="5"/>
<keyword id="KW-0021">Allosteric enzyme</keyword>
<keyword id="KW-0067">ATP-binding</keyword>
<keyword id="KW-0963">Cytoplasm</keyword>
<keyword id="KW-0436">Ligase</keyword>
<keyword id="KW-0547">Nucleotide-binding</keyword>
<keyword id="KW-0566">Pantothenate biosynthesis</keyword>
<keyword id="KW-1185">Reference proteome</keyword>
<sequence>MEPEVIRDKDSMRKWSRAMRSQGKTIGLVPTMGYLHEGHLSLVRQSLALTDVTVVSIYVNPGQFSPTEDLSTYPSDFSGDLTKLAALSGGKVVVFNPKNLYDYGGETKKINDGGGNGGRVVSCVEEGGLGHETWIRVERLEKGFCGKSRPVFFRGVATIVTKLFNIVEPDVALFGKKDYQQWRIIQRMVRDLNFGIEIVGSDIAREKDGLAMSSRNVRLSDEERQRALSISRSLAMAKASVAEGKTNCAELKDMIIQQVVGSAGRVDYVEIVDQETLEGVEEIKSGVVICVAAWFGTVRLIDNIEINVSL</sequence>
<comment type="function">
    <text evidence="3 4">Catalyzes the condensation of pantoate with beta-alanine to form pantothenate. Essential for panthotenate biosynthesis.</text>
</comment>
<comment type="catalytic activity">
    <reaction evidence="3">
        <text>(R)-pantoate + beta-alanine + ATP = (R)-pantothenate + AMP + diphosphate + H(+)</text>
        <dbReference type="Rhea" id="RHEA:10912"/>
        <dbReference type="ChEBI" id="CHEBI:15378"/>
        <dbReference type="ChEBI" id="CHEBI:15980"/>
        <dbReference type="ChEBI" id="CHEBI:29032"/>
        <dbReference type="ChEBI" id="CHEBI:30616"/>
        <dbReference type="ChEBI" id="CHEBI:33019"/>
        <dbReference type="ChEBI" id="CHEBI:57966"/>
        <dbReference type="ChEBI" id="CHEBI:456215"/>
        <dbReference type="EC" id="6.3.2.1"/>
    </reaction>
</comment>
<comment type="activity regulation">
    <text evidence="3">Enzyme kinetics do not match Michaelis-Menten kinetics, suggesting allosteric behavior. Inhibited by high pantoate levels.</text>
</comment>
<comment type="biophysicochemical properties">
    <phDependence>
        <text evidence="3">Optimum pH is 9.0.</text>
    </phDependence>
</comment>
<comment type="pathway">
    <text>Cofactor biosynthesis; (R)-pantothenate biosynthesis; (R)-pantothenate from (R)-pantoate and beta-alanine: step 1/1.</text>
</comment>
<comment type="subunit">
    <text evidence="3">Homodimer.</text>
</comment>
<comment type="subcellular location">
    <subcellularLocation>
        <location evidence="2">Cytoplasm</location>
        <location evidence="2">Cytosol</location>
    </subcellularLocation>
</comment>
<comment type="tissue specificity">
    <text evidence="4">Expressed in roots, cotyledons, leaves, stems, cauline leaves, stigma, sepals and petals.</text>
</comment>
<comment type="disruption phenotype">
    <text evidence="4">Embryonic lethality due to arrest of embryogenesis at the preglobular stage when homozygous.</text>
</comment>
<comment type="similarity">
    <text evidence="5">Belongs to the pantothenate synthetase family.</text>
</comment>
<proteinExistence type="evidence at protein level"/>
<organism>
    <name type="scientific">Arabidopsis thaliana</name>
    <name type="common">Mouse-ear cress</name>
    <dbReference type="NCBI Taxonomy" id="3702"/>
    <lineage>
        <taxon>Eukaryota</taxon>
        <taxon>Viridiplantae</taxon>
        <taxon>Streptophyta</taxon>
        <taxon>Embryophyta</taxon>
        <taxon>Tracheophyta</taxon>
        <taxon>Spermatophyta</taxon>
        <taxon>Magnoliopsida</taxon>
        <taxon>eudicotyledons</taxon>
        <taxon>Gunneridae</taxon>
        <taxon>Pentapetalae</taxon>
        <taxon>rosids</taxon>
        <taxon>malvids</taxon>
        <taxon>Brassicales</taxon>
        <taxon>Brassicaceae</taxon>
        <taxon>Camelineae</taxon>
        <taxon>Arabidopsis</taxon>
    </lineage>
</organism>
<gene>
    <name type="ordered locus">At5g48840</name>
    <name type="ORF">K24G6.18</name>
</gene>
<accession>Q9FKB3</accession>
<accession>Q682X9</accession>
<protein>
    <recommendedName>
        <fullName>Pantoate--beta-alanine ligase</fullName>
        <ecNumber>6.3.2.1</ecNumber>
    </recommendedName>
    <alternativeName>
        <fullName>Pantoate-activating enzyme</fullName>
    </alternativeName>
    <alternativeName>
        <fullName>Pantothenate synthetase</fullName>
    </alternativeName>
</protein>